<protein>
    <recommendedName>
        <fullName>Transcription factor IIIA</fullName>
        <shortName>TFIIIA</shortName>
    </recommendedName>
</protein>
<reference key="1">
    <citation type="journal article" date="2002" name="Gene">
        <title>cDNA cloning, DNA binding, and evolution of mammalian transcription factor IIIA.</title>
        <authorList>
            <person name="Hanas J.S."/>
            <person name="Hocker J.R."/>
            <person name="Cheng Y.-G."/>
            <person name="Lerner M.R."/>
            <person name="Brackett D.J."/>
            <person name="Lightfoot S.A."/>
            <person name="Hanas R.J."/>
            <person name="Madhusudhan K.T."/>
            <person name="Moreland R.J."/>
        </authorList>
    </citation>
    <scope>NUCLEOTIDE SEQUENCE [MRNA]</scope>
</reference>
<reference key="2">
    <citation type="journal article" date="2005" name="Science">
        <title>The transcriptional landscape of the mammalian genome.</title>
        <authorList>
            <person name="Carninci P."/>
            <person name="Kasukawa T."/>
            <person name="Katayama S."/>
            <person name="Gough J."/>
            <person name="Frith M.C."/>
            <person name="Maeda N."/>
            <person name="Oyama R."/>
            <person name="Ravasi T."/>
            <person name="Lenhard B."/>
            <person name="Wells C."/>
            <person name="Kodzius R."/>
            <person name="Shimokawa K."/>
            <person name="Bajic V.B."/>
            <person name="Brenner S.E."/>
            <person name="Batalov S."/>
            <person name="Forrest A.R."/>
            <person name="Zavolan M."/>
            <person name="Davis M.J."/>
            <person name="Wilming L.G."/>
            <person name="Aidinis V."/>
            <person name="Allen J.E."/>
            <person name="Ambesi-Impiombato A."/>
            <person name="Apweiler R."/>
            <person name="Aturaliya R.N."/>
            <person name="Bailey T.L."/>
            <person name="Bansal M."/>
            <person name="Baxter L."/>
            <person name="Beisel K.W."/>
            <person name="Bersano T."/>
            <person name="Bono H."/>
            <person name="Chalk A.M."/>
            <person name="Chiu K.P."/>
            <person name="Choudhary V."/>
            <person name="Christoffels A."/>
            <person name="Clutterbuck D.R."/>
            <person name="Crowe M.L."/>
            <person name="Dalla E."/>
            <person name="Dalrymple B.P."/>
            <person name="de Bono B."/>
            <person name="Della Gatta G."/>
            <person name="di Bernardo D."/>
            <person name="Down T."/>
            <person name="Engstrom P."/>
            <person name="Fagiolini M."/>
            <person name="Faulkner G."/>
            <person name="Fletcher C.F."/>
            <person name="Fukushima T."/>
            <person name="Furuno M."/>
            <person name="Futaki S."/>
            <person name="Gariboldi M."/>
            <person name="Georgii-Hemming P."/>
            <person name="Gingeras T.R."/>
            <person name="Gojobori T."/>
            <person name="Green R.E."/>
            <person name="Gustincich S."/>
            <person name="Harbers M."/>
            <person name="Hayashi Y."/>
            <person name="Hensch T.K."/>
            <person name="Hirokawa N."/>
            <person name="Hill D."/>
            <person name="Huminiecki L."/>
            <person name="Iacono M."/>
            <person name="Ikeo K."/>
            <person name="Iwama A."/>
            <person name="Ishikawa T."/>
            <person name="Jakt M."/>
            <person name="Kanapin A."/>
            <person name="Katoh M."/>
            <person name="Kawasawa Y."/>
            <person name="Kelso J."/>
            <person name="Kitamura H."/>
            <person name="Kitano H."/>
            <person name="Kollias G."/>
            <person name="Krishnan S.P."/>
            <person name="Kruger A."/>
            <person name="Kummerfeld S.K."/>
            <person name="Kurochkin I.V."/>
            <person name="Lareau L.F."/>
            <person name="Lazarevic D."/>
            <person name="Lipovich L."/>
            <person name="Liu J."/>
            <person name="Liuni S."/>
            <person name="McWilliam S."/>
            <person name="Madan Babu M."/>
            <person name="Madera M."/>
            <person name="Marchionni L."/>
            <person name="Matsuda H."/>
            <person name="Matsuzawa S."/>
            <person name="Miki H."/>
            <person name="Mignone F."/>
            <person name="Miyake S."/>
            <person name="Morris K."/>
            <person name="Mottagui-Tabar S."/>
            <person name="Mulder N."/>
            <person name="Nakano N."/>
            <person name="Nakauchi H."/>
            <person name="Ng P."/>
            <person name="Nilsson R."/>
            <person name="Nishiguchi S."/>
            <person name="Nishikawa S."/>
            <person name="Nori F."/>
            <person name="Ohara O."/>
            <person name="Okazaki Y."/>
            <person name="Orlando V."/>
            <person name="Pang K.C."/>
            <person name="Pavan W.J."/>
            <person name="Pavesi G."/>
            <person name="Pesole G."/>
            <person name="Petrovsky N."/>
            <person name="Piazza S."/>
            <person name="Reed J."/>
            <person name="Reid J.F."/>
            <person name="Ring B.Z."/>
            <person name="Ringwald M."/>
            <person name="Rost B."/>
            <person name="Ruan Y."/>
            <person name="Salzberg S.L."/>
            <person name="Sandelin A."/>
            <person name="Schneider C."/>
            <person name="Schoenbach C."/>
            <person name="Sekiguchi K."/>
            <person name="Semple C.A."/>
            <person name="Seno S."/>
            <person name="Sessa L."/>
            <person name="Sheng Y."/>
            <person name="Shibata Y."/>
            <person name="Shimada H."/>
            <person name="Shimada K."/>
            <person name="Silva D."/>
            <person name="Sinclair B."/>
            <person name="Sperling S."/>
            <person name="Stupka E."/>
            <person name="Sugiura K."/>
            <person name="Sultana R."/>
            <person name="Takenaka Y."/>
            <person name="Taki K."/>
            <person name="Tammoja K."/>
            <person name="Tan S.L."/>
            <person name="Tang S."/>
            <person name="Taylor M.S."/>
            <person name="Tegner J."/>
            <person name="Teichmann S.A."/>
            <person name="Ueda H.R."/>
            <person name="van Nimwegen E."/>
            <person name="Verardo R."/>
            <person name="Wei C.L."/>
            <person name="Yagi K."/>
            <person name="Yamanishi H."/>
            <person name="Zabarovsky E."/>
            <person name="Zhu S."/>
            <person name="Zimmer A."/>
            <person name="Hide W."/>
            <person name="Bult C."/>
            <person name="Grimmond S.M."/>
            <person name="Teasdale R.D."/>
            <person name="Liu E.T."/>
            <person name="Brusic V."/>
            <person name="Quackenbush J."/>
            <person name="Wahlestedt C."/>
            <person name="Mattick J.S."/>
            <person name="Hume D.A."/>
            <person name="Kai C."/>
            <person name="Sasaki D."/>
            <person name="Tomaru Y."/>
            <person name="Fukuda S."/>
            <person name="Kanamori-Katayama M."/>
            <person name="Suzuki M."/>
            <person name="Aoki J."/>
            <person name="Arakawa T."/>
            <person name="Iida J."/>
            <person name="Imamura K."/>
            <person name="Itoh M."/>
            <person name="Kato T."/>
            <person name="Kawaji H."/>
            <person name="Kawagashira N."/>
            <person name="Kawashima T."/>
            <person name="Kojima M."/>
            <person name="Kondo S."/>
            <person name="Konno H."/>
            <person name="Nakano K."/>
            <person name="Ninomiya N."/>
            <person name="Nishio T."/>
            <person name="Okada M."/>
            <person name="Plessy C."/>
            <person name="Shibata K."/>
            <person name="Shiraki T."/>
            <person name="Suzuki S."/>
            <person name="Tagami M."/>
            <person name="Waki K."/>
            <person name="Watahiki A."/>
            <person name="Okamura-Oho Y."/>
            <person name="Suzuki H."/>
            <person name="Kawai J."/>
            <person name="Hayashizaki Y."/>
        </authorList>
    </citation>
    <scope>NUCLEOTIDE SEQUENCE [LARGE SCALE MRNA]</scope>
    <source>
        <strain>C57BL/6J</strain>
        <tissue>Small intestine</tissue>
    </source>
</reference>
<reference key="3">
    <citation type="journal article" date="2004" name="Genome Res.">
        <title>The status, quality, and expansion of the NIH full-length cDNA project: the Mammalian Gene Collection (MGC).</title>
        <authorList>
            <consortium name="The MGC Project Team"/>
        </authorList>
    </citation>
    <scope>NUCLEOTIDE SEQUENCE [LARGE SCALE MRNA] OF 75-364</scope>
    <source>
        <strain>FVB/N-3</strain>
        <tissue>Mammary tumor</tissue>
    </source>
</reference>
<gene>
    <name type="primary">Gtf3a</name>
</gene>
<evidence type="ECO:0000250" key="1"/>
<evidence type="ECO:0000250" key="2">
    <source>
        <dbReference type="UniProtKB" id="P17842"/>
    </source>
</evidence>
<evidence type="ECO:0000250" key="3">
    <source>
        <dbReference type="UniProtKB" id="Q92664"/>
    </source>
</evidence>
<evidence type="ECO:0000255" key="4">
    <source>
        <dbReference type="PROSITE-ProRule" id="PRU00042"/>
    </source>
</evidence>
<evidence type="ECO:0000256" key="5">
    <source>
        <dbReference type="SAM" id="MobiDB-lite"/>
    </source>
</evidence>
<evidence type="ECO:0000305" key="6"/>
<dbReference type="EMBL" id="AF391799">
    <property type="protein sequence ID" value="AAL69686.1"/>
    <property type="status" value="ALT_INIT"/>
    <property type="molecule type" value="mRNA"/>
</dbReference>
<dbReference type="EMBL" id="AK008247">
    <property type="protein sequence ID" value="BAC25209.1"/>
    <property type="status" value="ALT_INIT"/>
    <property type="molecule type" value="mRNA"/>
</dbReference>
<dbReference type="EMBL" id="AK012797">
    <property type="protein sequence ID" value="BAB28476.2"/>
    <property type="status" value="ALT_INIT"/>
    <property type="molecule type" value="mRNA"/>
</dbReference>
<dbReference type="EMBL" id="BC032292">
    <property type="protein sequence ID" value="AAH32292.1"/>
    <property type="molecule type" value="mRNA"/>
</dbReference>
<dbReference type="CCDS" id="CCDS19873.2"/>
<dbReference type="RefSeq" id="NP_079928.2">
    <property type="nucleotide sequence ID" value="NM_025652.3"/>
</dbReference>
<dbReference type="SMR" id="Q8VHT7"/>
<dbReference type="FunCoup" id="Q8VHT7">
    <property type="interactions" value="2370"/>
</dbReference>
<dbReference type="STRING" id="10090.ENSMUSP00000119607"/>
<dbReference type="GlyGen" id="Q8VHT7">
    <property type="glycosylation" value="1 site, 1 O-linked glycan (1 site)"/>
</dbReference>
<dbReference type="iPTMnet" id="Q8VHT7"/>
<dbReference type="PhosphoSitePlus" id="Q8VHT7"/>
<dbReference type="PaxDb" id="10090-ENSMUSP00000119607"/>
<dbReference type="ProteomicsDB" id="259014"/>
<dbReference type="Pumba" id="Q8VHT7"/>
<dbReference type="Antibodypedia" id="5062">
    <property type="antibodies" value="243 antibodies from 25 providers"/>
</dbReference>
<dbReference type="DNASU" id="66596"/>
<dbReference type="Ensembl" id="ENSMUST00000146511.8">
    <property type="protein sequence ID" value="ENSMUSP00000119607.2"/>
    <property type="gene ID" value="ENSMUSG00000016503.19"/>
</dbReference>
<dbReference type="GeneID" id="66596"/>
<dbReference type="KEGG" id="mmu:66596"/>
<dbReference type="UCSC" id="uc009ano.3">
    <property type="organism name" value="mouse"/>
</dbReference>
<dbReference type="AGR" id="MGI:1913846"/>
<dbReference type="CTD" id="2971"/>
<dbReference type="MGI" id="MGI:1913846">
    <property type="gene designation" value="Gtf3a"/>
</dbReference>
<dbReference type="eggNOG" id="KOG1721">
    <property type="taxonomic scope" value="Eukaryota"/>
</dbReference>
<dbReference type="GeneTree" id="ENSGT00940000155647"/>
<dbReference type="InParanoid" id="Q8VHT7"/>
<dbReference type="OMA" id="KVFRDSW"/>
<dbReference type="OrthoDB" id="2687452at2759"/>
<dbReference type="PhylomeDB" id="Q8VHT7"/>
<dbReference type="Reactome" id="R-MMU-76061">
    <property type="pathway name" value="RNA Polymerase III Transcription Initiation From Type 1 Promoter"/>
</dbReference>
<dbReference type="BioGRID-ORCS" id="66596">
    <property type="hits" value="21 hits in 81 CRISPR screens"/>
</dbReference>
<dbReference type="ChiTaRS" id="Gtf3a">
    <property type="organism name" value="mouse"/>
</dbReference>
<dbReference type="PRO" id="PR:Q8VHT7"/>
<dbReference type="Proteomes" id="UP000000589">
    <property type="component" value="Chromosome 5"/>
</dbReference>
<dbReference type="RNAct" id="Q8VHT7">
    <property type="molecule type" value="protein"/>
</dbReference>
<dbReference type="Bgee" id="ENSMUSG00000016503">
    <property type="expression patterns" value="Expressed in otic placode and 271 other cell types or tissues"/>
</dbReference>
<dbReference type="ExpressionAtlas" id="Q8VHT7">
    <property type="expression patterns" value="baseline and differential"/>
</dbReference>
<dbReference type="GO" id="GO:0005654">
    <property type="term" value="C:nucleoplasm"/>
    <property type="evidence" value="ECO:0007669"/>
    <property type="project" value="Ensembl"/>
</dbReference>
<dbReference type="GO" id="GO:0008097">
    <property type="term" value="F:5S rRNA binding"/>
    <property type="evidence" value="ECO:0000250"/>
    <property type="project" value="UniProtKB"/>
</dbReference>
<dbReference type="GO" id="GO:0003677">
    <property type="term" value="F:DNA binding"/>
    <property type="evidence" value="ECO:0000314"/>
    <property type="project" value="MGI"/>
</dbReference>
<dbReference type="GO" id="GO:0008270">
    <property type="term" value="F:zinc ion binding"/>
    <property type="evidence" value="ECO:0007669"/>
    <property type="project" value="UniProtKB-KW"/>
</dbReference>
<dbReference type="GO" id="GO:0042273">
    <property type="term" value="P:ribosomal large subunit biogenesis"/>
    <property type="evidence" value="ECO:0000250"/>
    <property type="project" value="UniProtKB"/>
</dbReference>
<dbReference type="FunFam" id="3.30.160.60:FF:001572">
    <property type="entry name" value="General transcription factor IIIA"/>
    <property type="match status" value="1"/>
</dbReference>
<dbReference type="FunFam" id="3.30.160.60:FF:001810">
    <property type="entry name" value="General transcription factor IIIA"/>
    <property type="match status" value="1"/>
</dbReference>
<dbReference type="FunFam" id="3.30.160.60:FF:000125">
    <property type="entry name" value="Putative zinc finger protein 143"/>
    <property type="match status" value="1"/>
</dbReference>
<dbReference type="FunFam" id="3.30.160.60:FF:001102">
    <property type="entry name" value="Transcription factor IIIA"/>
    <property type="match status" value="1"/>
</dbReference>
<dbReference type="FunFam" id="3.30.160.60:FF:001347">
    <property type="entry name" value="Transcription factor IIIA"/>
    <property type="match status" value="1"/>
</dbReference>
<dbReference type="FunFam" id="3.30.160.60:FF:001998">
    <property type="entry name" value="Transcription factor IIIA"/>
    <property type="match status" value="1"/>
</dbReference>
<dbReference type="FunFam" id="3.30.160.60:FF:001610">
    <property type="entry name" value="transcription factor IIIA"/>
    <property type="match status" value="1"/>
</dbReference>
<dbReference type="FunFam" id="3.30.160.60:FF:000446">
    <property type="entry name" value="Zinc finger protein"/>
    <property type="match status" value="1"/>
</dbReference>
<dbReference type="Gene3D" id="3.30.160.60">
    <property type="entry name" value="Classic Zinc Finger"/>
    <property type="match status" value="9"/>
</dbReference>
<dbReference type="InterPro" id="IPR054599">
    <property type="entry name" value="TFIIIA_Zfn-C2H2"/>
</dbReference>
<dbReference type="InterPro" id="IPR051061">
    <property type="entry name" value="Zinc_finger_trans_reg"/>
</dbReference>
<dbReference type="InterPro" id="IPR036236">
    <property type="entry name" value="Znf_C2H2_sf"/>
</dbReference>
<dbReference type="InterPro" id="IPR013087">
    <property type="entry name" value="Znf_C2H2_type"/>
</dbReference>
<dbReference type="PANTHER" id="PTHR46179:SF1">
    <property type="entry name" value="TRANSCRIPTION FACTOR IIIA"/>
    <property type="match status" value="1"/>
</dbReference>
<dbReference type="PANTHER" id="PTHR46179">
    <property type="entry name" value="ZINC FINGER PROTEIN"/>
    <property type="match status" value="1"/>
</dbReference>
<dbReference type="Pfam" id="PF22110">
    <property type="entry name" value="TFIIIA_zf-C2H2"/>
    <property type="match status" value="1"/>
</dbReference>
<dbReference type="Pfam" id="PF00096">
    <property type="entry name" value="zf-C2H2"/>
    <property type="match status" value="5"/>
</dbReference>
<dbReference type="SMART" id="SM00355">
    <property type="entry name" value="ZnF_C2H2"/>
    <property type="match status" value="9"/>
</dbReference>
<dbReference type="SUPFAM" id="SSF57667">
    <property type="entry name" value="beta-beta-alpha zinc fingers"/>
    <property type="match status" value="6"/>
</dbReference>
<dbReference type="PROSITE" id="PS00028">
    <property type="entry name" value="ZINC_FINGER_C2H2_1"/>
    <property type="match status" value="8"/>
</dbReference>
<dbReference type="PROSITE" id="PS50157">
    <property type="entry name" value="ZINC_FINGER_C2H2_2"/>
    <property type="match status" value="8"/>
</dbReference>
<name>TF3A_MOUSE</name>
<feature type="chain" id="PRO_0000319866" description="Transcription factor IIIA">
    <location>
        <begin position="1"/>
        <end position="364"/>
    </location>
</feature>
<feature type="zinc finger region" description="C2H2-type 1" evidence="4">
    <location>
        <begin position="38"/>
        <end position="62"/>
    </location>
</feature>
<feature type="zinc finger region" description="C2H2-type 2" evidence="4">
    <location>
        <begin position="68"/>
        <end position="92"/>
    </location>
</feature>
<feature type="zinc finger region" description="C2H2-type 3" evidence="4">
    <location>
        <begin position="98"/>
        <end position="123"/>
    </location>
</feature>
<feature type="zinc finger region" description="C2H2-type 4" evidence="4">
    <location>
        <begin position="130"/>
        <end position="154"/>
    </location>
</feature>
<feature type="zinc finger region" description="C2H2-type 5" evidence="4">
    <location>
        <begin position="160"/>
        <end position="184"/>
    </location>
</feature>
<feature type="zinc finger region" description="C2H2-type 6" evidence="4">
    <location>
        <begin position="187"/>
        <end position="211"/>
    </location>
</feature>
<feature type="zinc finger region" description="C2H2-type 7" evidence="4">
    <location>
        <begin position="215"/>
        <end position="237"/>
    </location>
</feature>
<feature type="zinc finger region" description="C2H2-type 8" evidence="4">
    <location>
        <begin position="244"/>
        <end position="269"/>
    </location>
</feature>
<feature type="zinc finger region" description="C2H2-type 9" evidence="4">
    <location>
        <begin position="275"/>
        <end position="299"/>
    </location>
</feature>
<feature type="region of interest" description="Disordered" evidence="5">
    <location>
        <begin position="299"/>
        <end position="364"/>
    </location>
</feature>
<feature type="compositionally biased region" description="Low complexity" evidence="5">
    <location>
        <begin position="338"/>
        <end position="352"/>
    </location>
</feature>
<feature type="sequence conflict" description="In Ref. 3; AAH32292." evidence="6" ref="3">
    <original>CGK</original>
    <variation>HAS</variation>
    <location>
        <begin position="75"/>
        <end position="77"/>
    </location>
</feature>
<feature type="sequence conflict" description="In Ref. 1; AAL69686." evidence="6" ref="1">
    <original>V</original>
    <variation>L</variation>
    <location>
        <position position="131"/>
    </location>
</feature>
<feature type="sequence conflict" description="In Ref. 2; BAC25209." evidence="6" ref="2">
    <original>THQCQHTSEPLFRCTHEGCGKHFAS</original>
    <variation>PISASTPASRSSGVPTRDAGSTLPR</variation>
    <location>
        <begin position="149"/>
        <end position="173"/>
    </location>
</feature>
<feature type="sequence conflict" description="In Ref. 2; BAC25209." evidence="6" ref="2">
    <original>S</original>
    <variation>P</variation>
    <location>
        <position position="194"/>
    </location>
</feature>
<feature type="sequence conflict" description="In Ref. 2; BAC25209." evidence="6" ref="2">
    <original>K</original>
    <variation>I</variation>
    <location>
        <position position="198"/>
    </location>
</feature>
<feature type="sequence conflict" description="In Ref. 3; AAH32292." evidence="6" ref="3">
    <original>A</original>
    <variation>T</variation>
    <location>
        <position position="359"/>
    </location>
</feature>
<comment type="function">
    <text evidence="2 3">Involved in ribosomal large subunit biogenesis. Binds the approximately 50 base pairs internal control region (ICR) of 5S ribosomal RNA genes. It is required for their RNA polymerase III-dependent transcription and may also maintain the transcription of other genes (By similarity). Also binds the transcribed 5S RNA's (By similarity).</text>
</comment>
<comment type="subcellular location">
    <subcellularLocation>
        <location evidence="1">Nucleus</location>
    </subcellularLocation>
</comment>
<comment type="caution">
    <text evidence="6">It is uncertain whether Met-1 is the initiator. Based on the lack of an in-frame AUG codon, mammalian TFIIIA may be translated from this non-AUG initiation site, which has a good Kozak context and which is well conserved among mammals.</text>
</comment>
<comment type="sequence caution" evidence="6">
    <conflict type="erroneous initiation">
        <sequence resource="EMBL-CDS" id="AAL69686"/>
    </conflict>
</comment>
<comment type="sequence caution" evidence="6">
    <conflict type="erroneous initiation">
        <sequence resource="EMBL-CDS" id="BAB28476"/>
    </conflict>
</comment>
<comment type="sequence caution" evidence="6">
    <conflict type="erroneous initiation">
        <sequence resource="EMBL-CDS" id="BAC25209"/>
    </conflict>
</comment>
<organism>
    <name type="scientific">Mus musculus</name>
    <name type="common">Mouse</name>
    <dbReference type="NCBI Taxonomy" id="10090"/>
    <lineage>
        <taxon>Eukaryota</taxon>
        <taxon>Metazoa</taxon>
        <taxon>Chordata</taxon>
        <taxon>Craniata</taxon>
        <taxon>Vertebrata</taxon>
        <taxon>Euteleostomi</taxon>
        <taxon>Mammalia</taxon>
        <taxon>Eutheria</taxon>
        <taxon>Euarchontoglires</taxon>
        <taxon>Glires</taxon>
        <taxon>Rodentia</taxon>
        <taxon>Myomorpha</taxon>
        <taxon>Muroidea</taxon>
        <taxon>Muridae</taxon>
        <taxon>Murinae</taxon>
        <taxon>Mus</taxon>
        <taxon>Mus</taxon>
    </lineage>
</organism>
<accession>Q8VHT7</accession>
<accession>Q8BJ79</accession>
<accession>Q8K270</accession>
<accession>Q9CSH8</accession>
<sequence>MEPRVSVAEAVSSLTIADAFVGACEGPAPPRPALPSRFICSFPDCSASYNKAWKLDAHLCKHTGERPFVCDYEGCGKAFIRDYHLSRHVLIHTGEKPFVCADDGCNQKFNTKSNLKKHIERKHGNPQKQYVCSYEGCKKAFKKHQQLRTHQCQHTSEPLFRCTHEGCGKHFASPSRLKRHGKVHEGYLCQKGCSFMGKTWTELLKHMREAHKEDITCNVCQRMFKRRDYLKQHMKTHAPERDVYRCPRQGCGRTYTTVFNLQSHILSFHEEKRPFVCEHAGCGKTFAMKQSLMRHSVVHDPDKKRMKLKVRAPRERRSLASRLSGYFPPKRKQEPDYSLPNASAESSSSPEAQLPPPAALLTVC</sequence>
<keyword id="KW-0238">DNA-binding</keyword>
<keyword id="KW-0479">Metal-binding</keyword>
<keyword id="KW-0539">Nucleus</keyword>
<keyword id="KW-1185">Reference proteome</keyword>
<keyword id="KW-0677">Repeat</keyword>
<keyword id="KW-0690">Ribosome biogenesis</keyword>
<keyword id="KW-0694">RNA-binding</keyword>
<keyword id="KW-0804">Transcription</keyword>
<keyword id="KW-0805">Transcription regulation</keyword>
<keyword id="KW-0862">Zinc</keyword>
<keyword id="KW-0863">Zinc-finger</keyword>
<proteinExistence type="evidence at transcript level"/>